<name>SYQ_POLAQ</name>
<organism>
    <name type="scientific">Polynucleobacter asymbioticus (strain DSM 18221 / CIP 109841 / QLW-P1DMWA-1)</name>
    <name type="common">Polynucleobacter necessarius subsp. asymbioticus</name>
    <dbReference type="NCBI Taxonomy" id="312153"/>
    <lineage>
        <taxon>Bacteria</taxon>
        <taxon>Pseudomonadati</taxon>
        <taxon>Pseudomonadota</taxon>
        <taxon>Betaproteobacteria</taxon>
        <taxon>Burkholderiales</taxon>
        <taxon>Burkholderiaceae</taxon>
        <taxon>Polynucleobacter</taxon>
    </lineage>
</organism>
<proteinExistence type="inferred from homology"/>
<feature type="chain" id="PRO_1000095497" description="Glutamine--tRNA ligase">
    <location>
        <begin position="1"/>
        <end position="590"/>
    </location>
</feature>
<feature type="short sequence motif" description="'HIGH' region" evidence="1">
    <location>
        <begin position="55"/>
        <end position="65"/>
    </location>
</feature>
<feature type="short sequence motif" description="'KMSKS' region" evidence="1">
    <location>
        <begin position="299"/>
        <end position="303"/>
    </location>
</feature>
<feature type="binding site" evidence="1">
    <location>
        <begin position="56"/>
        <end position="58"/>
    </location>
    <ligand>
        <name>ATP</name>
        <dbReference type="ChEBI" id="CHEBI:30616"/>
    </ligand>
</feature>
<feature type="binding site" evidence="1">
    <location>
        <begin position="62"/>
        <end position="68"/>
    </location>
    <ligand>
        <name>ATP</name>
        <dbReference type="ChEBI" id="CHEBI:30616"/>
    </ligand>
</feature>
<feature type="binding site" evidence="1">
    <location>
        <position position="93"/>
    </location>
    <ligand>
        <name>L-glutamine</name>
        <dbReference type="ChEBI" id="CHEBI:58359"/>
    </ligand>
</feature>
<feature type="binding site" evidence="1">
    <location>
        <position position="238"/>
    </location>
    <ligand>
        <name>L-glutamine</name>
        <dbReference type="ChEBI" id="CHEBI:58359"/>
    </ligand>
</feature>
<feature type="binding site" evidence="1">
    <location>
        <position position="257"/>
    </location>
    <ligand>
        <name>ATP</name>
        <dbReference type="ChEBI" id="CHEBI:30616"/>
    </ligand>
</feature>
<feature type="binding site" evidence="1">
    <location>
        <begin position="292"/>
        <end position="293"/>
    </location>
    <ligand>
        <name>ATP</name>
        <dbReference type="ChEBI" id="CHEBI:30616"/>
    </ligand>
</feature>
<keyword id="KW-0030">Aminoacyl-tRNA synthetase</keyword>
<keyword id="KW-0067">ATP-binding</keyword>
<keyword id="KW-0963">Cytoplasm</keyword>
<keyword id="KW-0436">Ligase</keyword>
<keyword id="KW-0547">Nucleotide-binding</keyword>
<keyword id="KW-0648">Protein biosynthesis</keyword>
<keyword id="KW-1185">Reference proteome</keyword>
<comment type="catalytic activity">
    <reaction evidence="1">
        <text>tRNA(Gln) + L-glutamine + ATP = L-glutaminyl-tRNA(Gln) + AMP + diphosphate</text>
        <dbReference type="Rhea" id="RHEA:20121"/>
        <dbReference type="Rhea" id="RHEA-COMP:9662"/>
        <dbReference type="Rhea" id="RHEA-COMP:9681"/>
        <dbReference type="ChEBI" id="CHEBI:30616"/>
        <dbReference type="ChEBI" id="CHEBI:33019"/>
        <dbReference type="ChEBI" id="CHEBI:58359"/>
        <dbReference type="ChEBI" id="CHEBI:78442"/>
        <dbReference type="ChEBI" id="CHEBI:78521"/>
        <dbReference type="ChEBI" id="CHEBI:456215"/>
        <dbReference type="EC" id="6.1.1.18"/>
    </reaction>
</comment>
<comment type="subunit">
    <text evidence="1">Monomer.</text>
</comment>
<comment type="subcellular location">
    <subcellularLocation>
        <location evidence="1">Cytoplasm</location>
    </subcellularLocation>
</comment>
<comment type="similarity">
    <text evidence="1">Belongs to the class-I aminoacyl-tRNA synthetase family.</text>
</comment>
<dbReference type="EC" id="6.1.1.18" evidence="1"/>
<dbReference type="EMBL" id="CP000655">
    <property type="protein sequence ID" value="ABP34935.1"/>
    <property type="molecule type" value="Genomic_DNA"/>
</dbReference>
<dbReference type="RefSeq" id="WP_011903558.1">
    <property type="nucleotide sequence ID" value="NC_009379.1"/>
</dbReference>
<dbReference type="SMR" id="A4SZM1"/>
<dbReference type="GeneID" id="31482111"/>
<dbReference type="KEGG" id="pnu:Pnuc_1722"/>
<dbReference type="eggNOG" id="COG0008">
    <property type="taxonomic scope" value="Bacteria"/>
</dbReference>
<dbReference type="HOGENOM" id="CLU_001882_2_3_4"/>
<dbReference type="Proteomes" id="UP000000231">
    <property type="component" value="Chromosome"/>
</dbReference>
<dbReference type="GO" id="GO:0005829">
    <property type="term" value="C:cytosol"/>
    <property type="evidence" value="ECO:0007669"/>
    <property type="project" value="TreeGrafter"/>
</dbReference>
<dbReference type="GO" id="GO:0005524">
    <property type="term" value="F:ATP binding"/>
    <property type="evidence" value="ECO:0007669"/>
    <property type="project" value="UniProtKB-UniRule"/>
</dbReference>
<dbReference type="GO" id="GO:0004819">
    <property type="term" value="F:glutamine-tRNA ligase activity"/>
    <property type="evidence" value="ECO:0007669"/>
    <property type="project" value="UniProtKB-UniRule"/>
</dbReference>
<dbReference type="GO" id="GO:0006425">
    <property type="term" value="P:glutaminyl-tRNA aminoacylation"/>
    <property type="evidence" value="ECO:0007669"/>
    <property type="project" value="InterPro"/>
</dbReference>
<dbReference type="GO" id="GO:0006424">
    <property type="term" value="P:glutamyl-tRNA aminoacylation"/>
    <property type="evidence" value="ECO:0007669"/>
    <property type="project" value="UniProtKB-UniRule"/>
</dbReference>
<dbReference type="CDD" id="cd00807">
    <property type="entry name" value="GlnRS_core"/>
    <property type="match status" value="1"/>
</dbReference>
<dbReference type="FunFam" id="1.10.1160.10:FF:000001">
    <property type="entry name" value="Glutamine--tRNA ligase"/>
    <property type="match status" value="1"/>
</dbReference>
<dbReference type="FunFam" id="3.90.800.10:FF:000001">
    <property type="entry name" value="Glutamine--tRNA ligase"/>
    <property type="match status" value="1"/>
</dbReference>
<dbReference type="FunFam" id="3.40.50.620:FF:000037">
    <property type="entry name" value="Glutamine--tRNA ligase cytoplasmic"/>
    <property type="match status" value="1"/>
</dbReference>
<dbReference type="Gene3D" id="1.10.1160.10">
    <property type="entry name" value="Glutamyl-trna Synthetase, Domain 2"/>
    <property type="match status" value="1"/>
</dbReference>
<dbReference type="Gene3D" id="3.90.800.10">
    <property type="entry name" value="Glutamyl-tRNA Synthetase, Domain 3"/>
    <property type="match status" value="1"/>
</dbReference>
<dbReference type="Gene3D" id="3.40.50.620">
    <property type="entry name" value="HUPs"/>
    <property type="match status" value="1"/>
</dbReference>
<dbReference type="Gene3D" id="2.40.240.10">
    <property type="entry name" value="Ribosomal Protein L25, Chain P"/>
    <property type="match status" value="2"/>
</dbReference>
<dbReference type="HAMAP" id="MF_00126">
    <property type="entry name" value="Gln_tRNA_synth"/>
    <property type="match status" value="1"/>
</dbReference>
<dbReference type="InterPro" id="IPR001412">
    <property type="entry name" value="aa-tRNA-synth_I_CS"/>
</dbReference>
<dbReference type="InterPro" id="IPR004514">
    <property type="entry name" value="Gln-tRNA-synth"/>
</dbReference>
<dbReference type="InterPro" id="IPR050132">
    <property type="entry name" value="Gln/Glu-tRNA_Ligase"/>
</dbReference>
<dbReference type="InterPro" id="IPR022861">
    <property type="entry name" value="Gln_tRNA_ligase_bac"/>
</dbReference>
<dbReference type="InterPro" id="IPR020058">
    <property type="entry name" value="Glu/Gln-tRNA-synth_Ib_cat-dom"/>
</dbReference>
<dbReference type="InterPro" id="IPR020059">
    <property type="entry name" value="Glu/Gln-tRNA-synth_Ib_codon-bd"/>
</dbReference>
<dbReference type="InterPro" id="IPR020061">
    <property type="entry name" value="Glu_tRNA_lig_a-bdl"/>
</dbReference>
<dbReference type="InterPro" id="IPR020056">
    <property type="entry name" value="Rbsml_bL25/Gln-tRNA_synth_N"/>
</dbReference>
<dbReference type="InterPro" id="IPR011035">
    <property type="entry name" value="Ribosomal_bL25/Gln-tRNA_synth"/>
</dbReference>
<dbReference type="InterPro" id="IPR014729">
    <property type="entry name" value="Rossmann-like_a/b/a_fold"/>
</dbReference>
<dbReference type="InterPro" id="IPR049437">
    <property type="entry name" value="tRNA-synt_1c_C2"/>
</dbReference>
<dbReference type="NCBIfam" id="TIGR00440">
    <property type="entry name" value="glnS"/>
    <property type="match status" value="1"/>
</dbReference>
<dbReference type="NCBIfam" id="NF011291">
    <property type="entry name" value="PRK14703.1"/>
    <property type="match status" value="1"/>
</dbReference>
<dbReference type="PANTHER" id="PTHR43097:SF5">
    <property type="entry name" value="GLUTAMATE--TRNA LIGASE"/>
    <property type="match status" value="1"/>
</dbReference>
<dbReference type="PANTHER" id="PTHR43097">
    <property type="entry name" value="GLUTAMINE-TRNA LIGASE"/>
    <property type="match status" value="1"/>
</dbReference>
<dbReference type="Pfam" id="PF00749">
    <property type="entry name" value="tRNA-synt_1c"/>
    <property type="match status" value="1"/>
</dbReference>
<dbReference type="Pfam" id="PF03950">
    <property type="entry name" value="tRNA-synt_1c_C"/>
    <property type="match status" value="1"/>
</dbReference>
<dbReference type="Pfam" id="PF20974">
    <property type="entry name" value="tRNA-synt_1c_C2"/>
    <property type="match status" value="1"/>
</dbReference>
<dbReference type="SUPFAM" id="SSF52374">
    <property type="entry name" value="Nucleotidylyl transferase"/>
    <property type="match status" value="1"/>
</dbReference>
<dbReference type="SUPFAM" id="SSF50715">
    <property type="entry name" value="Ribosomal protein L25-like"/>
    <property type="match status" value="1"/>
</dbReference>
<dbReference type="PROSITE" id="PS00178">
    <property type="entry name" value="AA_TRNA_LIGASE_I"/>
    <property type="match status" value="1"/>
</dbReference>
<reference key="1">
    <citation type="journal article" date="2012" name="Stand. Genomic Sci.">
        <title>Complete genome sequence of Polynucleobacter necessarius subsp. asymbioticus type strain (QLW-P1DMWA-1(T)).</title>
        <authorList>
            <person name="Meincke L."/>
            <person name="Copeland A."/>
            <person name="Lapidus A."/>
            <person name="Lucas S."/>
            <person name="Berry K.W."/>
            <person name="Del Rio T.G."/>
            <person name="Hammon N."/>
            <person name="Dalin E."/>
            <person name="Tice H."/>
            <person name="Pitluck S."/>
            <person name="Richardson P."/>
            <person name="Bruce D."/>
            <person name="Goodwin L."/>
            <person name="Han C."/>
            <person name="Tapia R."/>
            <person name="Detter J.C."/>
            <person name="Schmutz J."/>
            <person name="Brettin T."/>
            <person name="Larimer F."/>
            <person name="Land M."/>
            <person name="Hauser L."/>
            <person name="Kyrpides N.C."/>
            <person name="Ivanova N."/>
            <person name="Goker M."/>
            <person name="Woyke T."/>
            <person name="Wu Q.L."/>
            <person name="Pockl M."/>
            <person name="Hahn M.W."/>
            <person name="Klenk H.P."/>
        </authorList>
    </citation>
    <scope>NUCLEOTIDE SEQUENCE [LARGE SCALE GENOMIC DNA]</scope>
    <source>
        <strain>DSM 18221 / CIP 109841 / QLW-P1DMWA-1</strain>
    </source>
</reference>
<evidence type="ECO:0000255" key="1">
    <source>
        <dbReference type="HAMAP-Rule" id="MF_00126"/>
    </source>
</evidence>
<sequence length="590" mass="67427">MSQDSKPTKSAAGAIAEPSNFLRQIIDHDLASGAFAQRTNLAGEAIPSIITRFPPEPNGYLHIGHAKSICLNFGLAADYNNQSGGARCNMRLDDTNPVKEDVEYADSILDAVKWLGFDWGTHLYHASDYFDRLYEFAEILIQNSKAYVDSQSADDIHTNRGNFGQVGKNSPYRERTPDENLQLFREMRDGKFKDGEHVLRLKIDMAHPNIVMRDPVVYRIRHTDHHRTGSKWCIYPLYDFTHCISDALENVSHSICTLEFENNRPLYDWIVNSLKELGVFKDPVPHQYEFARLNLTYTITSKRKLLQLVEEQHVEGWDDPRMPTIVGIRRRGYTPESIRLFCERIGVSKADSWIDMSTLDQALRDDLEARAPRATAVLKPLKLVVENFDAAHSEACSAPRHPHHPEWGNREFNFTKELWIEADDFMQEPVKGFFRLYPPIGDQPGSRVRLRHGFVVECTDFETDAKGNITQVNVNYFPDSKSGTPGSNNYKVKGNIHWISAAEAIPAEVRLYDHLFTDPHPDSGDKNFLDTINPHSKETIKAYLEPCMKDVKPEDRFQFERHGYFVADQNDSAPGKPVFNRTVGLKDSWK</sequence>
<accession>A4SZM1</accession>
<protein>
    <recommendedName>
        <fullName evidence="1">Glutamine--tRNA ligase</fullName>
        <ecNumber evidence="1">6.1.1.18</ecNumber>
    </recommendedName>
    <alternativeName>
        <fullName evidence="1">Glutaminyl-tRNA synthetase</fullName>
        <shortName evidence="1">GlnRS</shortName>
    </alternativeName>
</protein>
<gene>
    <name evidence="1" type="primary">glnS</name>
    <name type="ordered locus">Pnuc_1722</name>
</gene>